<reference key="1">
    <citation type="journal article" date="1997" name="Nature">
        <title>The complete genome sequence of the Gram-positive bacterium Bacillus subtilis.</title>
        <authorList>
            <person name="Kunst F."/>
            <person name="Ogasawara N."/>
            <person name="Moszer I."/>
            <person name="Albertini A.M."/>
            <person name="Alloni G."/>
            <person name="Azevedo V."/>
            <person name="Bertero M.G."/>
            <person name="Bessieres P."/>
            <person name="Bolotin A."/>
            <person name="Borchert S."/>
            <person name="Borriss R."/>
            <person name="Boursier L."/>
            <person name="Brans A."/>
            <person name="Braun M."/>
            <person name="Brignell S.C."/>
            <person name="Bron S."/>
            <person name="Brouillet S."/>
            <person name="Bruschi C.V."/>
            <person name="Caldwell B."/>
            <person name="Capuano V."/>
            <person name="Carter N.M."/>
            <person name="Choi S.-K."/>
            <person name="Codani J.-J."/>
            <person name="Connerton I.F."/>
            <person name="Cummings N.J."/>
            <person name="Daniel R.A."/>
            <person name="Denizot F."/>
            <person name="Devine K.M."/>
            <person name="Duesterhoeft A."/>
            <person name="Ehrlich S.D."/>
            <person name="Emmerson P.T."/>
            <person name="Entian K.-D."/>
            <person name="Errington J."/>
            <person name="Fabret C."/>
            <person name="Ferrari E."/>
            <person name="Foulger D."/>
            <person name="Fritz C."/>
            <person name="Fujita M."/>
            <person name="Fujita Y."/>
            <person name="Fuma S."/>
            <person name="Galizzi A."/>
            <person name="Galleron N."/>
            <person name="Ghim S.-Y."/>
            <person name="Glaser P."/>
            <person name="Goffeau A."/>
            <person name="Golightly E.J."/>
            <person name="Grandi G."/>
            <person name="Guiseppi G."/>
            <person name="Guy B.J."/>
            <person name="Haga K."/>
            <person name="Haiech J."/>
            <person name="Harwood C.R."/>
            <person name="Henaut A."/>
            <person name="Hilbert H."/>
            <person name="Holsappel S."/>
            <person name="Hosono S."/>
            <person name="Hullo M.-F."/>
            <person name="Itaya M."/>
            <person name="Jones L.-M."/>
            <person name="Joris B."/>
            <person name="Karamata D."/>
            <person name="Kasahara Y."/>
            <person name="Klaerr-Blanchard M."/>
            <person name="Klein C."/>
            <person name="Kobayashi Y."/>
            <person name="Koetter P."/>
            <person name="Koningstein G."/>
            <person name="Krogh S."/>
            <person name="Kumano M."/>
            <person name="Kurita K."/>
            <person name="Lapidus A."/>
            <person name="Lardinois S."/>
            <person name="Lauber J."/>
            <person name="Lazarevic V."/>
            <person name="Lee S.-M."/>
            <person name="Levine A."/>
            <person name="Liu H."/>
            <person name="Masuda S."/>
            <person name="Mauel C."/>
            <person name="Medigue C."/>
            <person name="Medina N."/>
            <person name="Mellado R.P."/>
            <person name="Mizuno M."/>
            <person name="Moestl D."/>
            <person name="Nakai S."/>
            <person name="Noback M."/>
            <person name="Noone D."/>
            <person name="O'Reilly M."/>
            <person name="Ogawa K."/>
            <person name="Ogiwara A."/>
            <person name="Oudega B."/>
            <person name="Park S.-H."/>
            <person name="Parro V."/>
            <person name="Pohl T.M."/>
            <person name="Portetelle D."/>
            <person name="Porwollik S."/>
            <person name="Prescott A.M."/>
            <person name="Presecan E."/>
            <person name="Pujic P."/>
            <person name="Purnelle B."/>
            <person name="Rapoport G."/>
            <person name="Rey M."/>
            <person name="Reynolds S."/>
            <person name="Rieger M."/>
            <person name="Rivolta C."/>
            <person name="Rocha E."/>
            <person name="Roche B."/>
            <person name="Rose M."/>
            <person name="Sadaie Y."/>
            <person name="Sato T."/>
            <person name="Scanlan E."/>
            <person name="Schleich S."/>
            <person name="Schroeter R."/>
            <person name="Scoffone F."/>
            <person name="Sekiguchi J."/>
            <person name="Sekowska A."/>
            <person name="Seror S.J."/>
            <person name="Serror P."/>
            <person name="Shin B.-S."/>
            <person name="Soldo B."/>
            <person name="Sorokin A."/>
            <person name="Tacconi E."/>
            <person name="Takagi T."/>
            <person name="Takahashi H."/>
            <person name="Takemaru K."/>
            <person name="Takeuchi M."/>
            <person name="Tamakoshi A."/>
            <person name="Tanaka T."/>
            <person name="Terpstra P."/>
            <person name="Tognoni A."/>
            <person name="Tosato V."/>
            <person name="Uchiyama S."/>
            <person name="Vandenbol M."/>
            <person name="Vannier F."/>
            <person name="Vassarotti A."/>
            <person name="Viari A."/>
            <person name="Wambutt R."/>
            <person name="Wedler E."/>
            <person name="Wedler H."/>
            <person name="Weitzenegger T."/>
            <person name="Winters P."/>
            <person name="Wipat A."/>
            <person name="Yamamoto H."/>
            <person name="Yamane K."/>
            <person name="Yasumoto K."/>
            <person name="Yata K."/>
            <person name="Yoshida K."/>
            <person name="Yoshikawa H.-F."/>
            <person name="Zumstein E."/>
            <person name="Yoshikawa H."/>
            <person name="Danchin A."/>
        </authorList>
    </citation>
    <scope>NUCLEOTIDE SEQUENCE [LARGE SCALE GENOMIC DNA]</scope>
    <source>
        <strain>168</strain>
    </source>
</reference>
<accession>C0H3P9</accession>
<gene>
    <name type="primary">ytzJ</name>
    <name type="ordered locus">BSU29249</name>
</gene>
<name>YTZJ_BACSU</name>
<proteinExistence type="predicted"/>
<organism>
    <name type="scientific">Bacillus subtilis (strain 168)</name>
    <dbReference type="NCBI Taxonomy" id="224308"/>
    <lineage>
        <taxon>Bacteria</taxon>
        <taxon>Bacillati</taxon>
        <taxon>Bacillota</taxon>
        <taxon>Bacilli</taxon>
        <taxon>Bacillales</taxon>
        <taxon>Bacillaceae</taxon>
        <taxon>Bacillus</taxon>
    </lineage>
</organism>
<keyword id="KW-1185">Reference proteome</keyword>
<feature type="chain" id="PRO_0000382675" description="Uncharacterized protein YtzJ">
    <location>
        <begin position="1"/>
        <end position="63"/>
    </location>
</feature>
<sequence>MEVYSDRQLAKDQAARLRQGFSAYAETNSLASLIKKELQSHNLQVYEDLTDFGCWFIPVTDEH</sequence>
<protein>
    <recommendedName>
        <fullName>Uncharacterized protein YtzJ</fullName>
    </recommendedName>
</protein>
<dbReference type="EMBL" id="AL009126">
    <property type="protein sequence ID" value="CAX52678.1"/>
    <property type="molecule type" value="Genomic_DNA"/>
</dbReference>
<dbReference type="RefSeq" id="WP_003229407.1">
    <property type="nucleotide sequence ID" value="NZ_OZ025638.1"/>
</dbReference>
<dbReference type="RefSeq" id="YP_003097772.1">
    <property type="nucleotide sequence ID" value="NC_000964.3"/>
</dbReference>
<dbReference type="SMR" id="C0H3P9"/>
<dbReference type="FunCoup" id="C0H3P9">
    <property type="interactions" value="96"/>
</dbReference>
<dbReference type="STRING" id="224308.BSU29249"/>
<dbReference type="PaxDb" id="224308-BSU29249"/>
<dbReference type="EnsemblBacteria" id="CAX52678">
    <property type="protein sequence ID" value="CAX52678"/>
    <property type="gene ID" value="BSU_29249"/>
</dbReference>
<dbReference type="GeneID" id="8303031"/>
<dbReference type="KEGG" id="bsu:BSU29249"/>
<dbReference type="PATRIC" id="fig|224308.179.peg.3177"/>
<dbReference type="eggNOG" id="ENOG5033DXG">
    <property type="taxonomic scope" value="Bacteria"/>
</dbReference>
<dbReference type="InParanoid" id="C0H3P9"/>
<dbReference type="OrthoDB" id="2679903at2"/>
<dbReference type="BioCyc" id="BSUB:BSU29249-MONOMER"/>
<dbReference type="Proteomes" id="UP000001570">
    <property type="component" value="Chromosome"/>
</dbReference>